<name>P3F2B_XENLA</name>
<dbReference type="EMBL" id="X96423">
    <property type="protein sequence ID" value="CAA65283.1"/>
    <property type="molecule type" value="Genomic_DNA"/>
</dbReference>
<dbReference type="EMBL" id="BC072060">
    <property type="protein sequence ID" value="AAH72060.1"/>
    <property type="molecule type" value="mRNA"/>
</dbReference>
<dbReference type="EMBL" id="BC160684">
    <property type="protein sequence ID" value="AAI60684.1"/>
    <property type="molecule type" value="mRNA"/>
</dbReference>
<dbReference type="RefSeq" id="NP_001090220.1">
    <property type="nucleotide sequence ID" value="NM_001096751.1"/>
</dbReference>
<dbReference type="SMR" id="P70030"/>
<dbReference type="DNASU" id="779122"/>
<dbReference type="GeneID" id="779122"/>
<dbReference type="KEGG" id="xla:779122"/>
<dbReference type="AGR" id="Xenbase:XB-GENE-483178"/>
<dbReference type="CTD" id="779122"/>
<dbReference type="Xenbase" id="XB-GENE-483178">
    <property type="gene designation" value="pou3f2.L"/>
</dbReference>
<dbReference type="OMA" id="HQWITAP"/>
<dbReference type="OrthoDB" id="6358449at2759"/>
<dbReference type="Proteomes" id="UP000186698">
    <property type="component" value="Chromosome 5L"/>
</dbReference>
<dbReference type="Bgee" id="779122">
    <property type="expression patterns" value="Expressed in brain and 7 other cell types or tissues"/>
</dbReference>
<dbReference type="GO" id="GO:0005634">
    <property type="term" value="C:nucleus"/>
    <property type="evidence" value="ECO:0007669"/>
    <property type="project" value="UniProtKB-SubCell"/>
</dbReference>
<dbReference type="GO" id="GO:0000981">
    <property type="term" value="F:DNA-binding transcription factor activity, RNA polymerase II-specific"/>
    <property type="evidence" value="ECO:0000318"/>
    <property type="project" value="GO_Central"/>
</dbReference>
<dbReference type="GO" id="GO:0000978">
    <property type="term" value="F:RNA polymerase II cis-regulatory region sequence-specific DNA binding"/>
    <property type="evidence" value="ECO:0000318"/>
    <property type="project" value="GO_Central"/>
</dbReference>
<dbReference type="GO" id="GO:0007420">
    <property type="term" value="P:brain development"/>
    <property type="evidence" value="ECO:0007669"/>
    <property type="project" value="InterPro"/>
</dbReference>
<dbReference type="GO" id="GO:0006357">
    <property type="term" value="P:regulation of transcription by RNA polymerase II"/>
    <property type="evidence" value="ECO:0000318"/>
    <property type="project" value="GO_Central"/>
</dbReference>
<dbReference type="CDD" id="cd00086">
    <property type="entry name" value="homeodomain"/>
    <property type="match status" value="1"/>
</dbReference>
<dbReference type="FunFam" id="1.10.10.60:FF:000005">
    <property type="entry name" value="POU domain protein"/>
    <property type="match status" value="1"/>
</dbReference>
<dbReference type="FunFam" id="1.10.260.40:FF:000001">
    <property type="entry name" value="POU domain protein"/>
    <property type="match status" value="1"/>
</dbReference>
<dbReference type="Gene3D" id="1.10.10.60">
    <property type="entry name" value="Homeodomain-like"/>
    <property type="match status" value="1"/>
</dbReference>
<dbReference type="Gene3D" id="1.10.260.40">
    <property type="entry name" value="lambda repressor-like DNA-binding domains"/>
    <property type="match status" value="1"/>
</dbReference>
<dbReference type="InterPro" id="IPR001356">
    <property type="entry name" value="HD"/>
</dbReference>
<dbReference type="InterPro" id="IPR017970">
    <property type="entry name" value="Homeobox_CS"/>
</dbReference>
<dbReference type="InterPro" id="IPR009057">
    <property type="entry name" value="Homeodomain-like_sf"/>
</dbReference>
<dbReference type="InterPro" id="IPR010982">
    <property type="entry name" value="Lambda_DNA-bd_dom_sf"/>
</dbReference>
<dbReference type="InterPro" id="IPR013847">
    <property type="entry name" value="POU"/>
</dbReference>
<dbReference type="InterPro" id="IPR000327">
    <property type="entry name" value="POU_dom"/>
</dbReference>
<dbReference type="InterPro" id="IPR050255">
    <property type="entry name" value="POU_domain_TF"/>
</dbReference>
<dbReference type="InterPro" id="IPR016362">
    <property type="entry name" value="TF_POU_3"/>
</dbReference>
<dbReference type="PANTHER" id="PTHR11636">
    <property type="entry name" value="POU DOMAIN"/>
    <property type="match status" value="1"/>
</dbReference>
<dbReference type="PANTHER" id="PTHR11636:SF115">
    <property type="entry name" value="POU DOMAIN, CLASS 3, TRANSCRIPTION FACTOR 2"/>
    <property type="match status" value="1"/>
</dbReference>
<dbReference type="Pfam" id="PF00046">
    <property type="entry name" value="Homeodomain"/>
    <property type="match status" value="1"/>
</dbReference>
<dbReference type="Pfam" id="PF00157">
    <property type="entry name" value="Pou"/>
    <property type="match status" value="1"/>
</dbReference>
<dbReference type="PIRSF" id="PIRSF002629">
    <property type="entry name" value="Transcription_factor_POU"/>
    <property type="match status" value="1"/>
</dbReference>
<dbReference type="PRINTS" id="PR00028">
    <property type="entry name" value="POUDOMAIN"/>
</dbReference>
<dbReference type="SMART" id="SM00389">
    <property type="entry name" value="HOX"/>
    <property type="match status" value="1"/>
</dbReference>
<dbReference type="SMART" id="SM00352">
    <property type="entry name" value="POU"/>
    <property type="match status" value="1"/>
</dbReference>
<dbReference type="SUPFAM" id="SSF46689">
    <property type="entry name" value="Homeodomain-like"/>
    <property type="match status" value="1"/>
</dbReference>
<dbReference type="SUPFAM" id="SSF47413">
    <property type="entry name" value="lambda repressor-like DNA-binding domains"/>
    <property type="match status" value="1"/>
</dbReference>
<dbReference type="PROSITE" id="PS00027">
    <property type="entry name" value="HOMEOBOX_1"/>
    <property type="match status" value="1"/>
</dbReference>
<dbReference type="PROSITE" id="PS50071">
    <property type="entry name" value="HOMEOBOX_2"/>
    <property type="match status" value="1"/>
</dbReference>
<dbReference type="PROSITE" id="PS00035">
    <property type="entry name" value="POU_1"/>
    <property type="match status" value="1"/>
</dbReference>
<dbReference type="PROSITE" id="PS00465">
    <property type="entry name" value="POU_2"/>
    <property type="match status" value="1"/>
</dbReference>
<dbReference type="PROSITE" id="PS51179">
    <property type="entry name" value="POU_3"/>
    <property type="match status" value="1"/>
</dbReference>
<sequence length="385" mass="41985">MATTASNHYNLLGSGSSIVHADPGGMQQAQSYRDAQTLVQSDYTLQSNGHPLSHAHQWITALSHGDGAPWATSPLGQQDIKPTVQSSRDELHGSGTLQHQSRAPHLVHPAHGNHHGPGAWRSTGSTHLSSMASSNGQGLLYSQPSFTVNGMINPGSGQGMHHHGLRDSHDDHHGDHGHQQPSQTQQQQQQHSQLQGGHHDHSDEDTPTSDDLEQFAKQFKQRRIKLGFTQADVGLALGTLYGNVFSQTTICRFEALQLSFKNMCKLKPLLNKWLEEADSSSGSPTSIDKIAAQGRKRKKRTSIEVSVKGALESHFLKCPKPAAQEITSLADSLQLEKEVVRVWFCNRRQKEKRMTPPGGTIPGAEDVYGASRDTPPHLGVQTSVQ</sequence>
<organism>
    <name type="scientific">Xenopus laevis</name>
    <name type="common">African clawed frog</name>
    <dbReference type="NCBI Taxonomy" id="8355"/>
    <lineage>
        <taxon>Eukaryota</taxon>
        <taxon>Metazoa</taxon>
        <taxon>Chordata</taxon>
        <taxon>Craniata</taxon>
        <taxon>Vertebrata</taxon>
        <taxon>Euteleostomi</taxon>
        <taxon>Amphibia</taxon>
        <taxon>Batrachia</taxon>
        <taxon>Anura</taxon>
        <taxon>Pipoidea</taxon>
        <taxon>Pipidae</taxon>
        <taxon>Xenopodinae</taxon>
        <taxon>Xenopus</taxon>
        <taxon>Xenopus</taxon>
    </lineage>
</organism>
<feature type="chain" id="PRO_0000100726" description="POU domain, class 3, transcription factor 2-B">
    <location>
        <begin position="1"/>
        <end position="385"/>
    </location>
</feature>
<feature type="domain" description="POU-specific" evidence="3">
    <location>
        <begin position="204"/>
        <end position="278"/>
    </location>
</feature>
<feature type="DNA-binding region" description="Homeobox" evidence="2">
    <location>
        <begin position="296"/>
        <end position="355"/>
    </location>
</feature>
<feature type="region of interest" description="Disordered" evidence="4">
    <location>
        <begin position="106"/>
        <end position="136"/>
    </location>
</feature>
<feature type="region of interest" description="Disordered" evidence="4">
    <location>
        <begin position="149"/>
        <end position="209"/>
    </location>
</feature>
<feature type="region of interest" description="Disordered" evidence="4">
    <location>
        <begin position="351"/>
        <end position="385"/>
    </location>
</feature>
<feature type="compositionally biased region" description="Polar residues" evidence="4">
    <location>
        <begin position="122"/>
        <end position="136"/>
    </location>
</feature>
<feature type="compositionally biased region" description="Basic and acidic residues" evidence="4">
    <location>
        <begin position="165"/>
        <end position="178"/>
    </location>
</feature>
<feature type="compositionally biased region" description="Low complexity" evidence="4">
    <location>
        <begin position="179"/>
        <end position="196"/>
    </location>
</feature>
<reference key="1">
    <citation type="journal article" date="1996" name="Mech. Dev.">
        <title>Transcription of XLPOU3, a brain-specific gene, during Xenopus laevis early embryogenesis.</title>
        <authorList>
            <person name="Baltzinger M."/>
            <person name="Relaix F."/>
            <person name="Remy P."/>
        </authorList>
    </citation>
    <scope>NUCLEOTIDE SEQUENCE [GENOMIC DNA]</scope>
    <scope>TISSUE SPECIFICITY</scope>
    <scope>DEVELOPMENTAL STAGE</scope>
</reference>
<reference key="2">
    <citation type="submission" date="2008-03" db="EMBL/GenBank/DDBJ databases">
        <authorList>
            <consortium name="NIH - Xenopus Gene Collection (XGC) project"/>
        </authorList>
    </citation>
    <scope>NUCLEOTIDE SEQUENCE [LARGE SCALE MRNA]</scope>
    <source>
        <tissue>Gastrula</tissue>
        <tissue>Tail bud</tissue>
    </source>
</reference>
<gene>
    <name type="primary">pou3f2-b</name>
    <name type="synonym">pou3b</name>
    <name type="synonym">pou3f2</name>
</gene>
<evidence type="ECO:0000250" key="1"/>
<evidence type="ECO:0000255" key="2">
    <source>
        <dbReference type="PROSITE-ProRule" id="PRU00108"/>
    </source>
</evidence>
<evidence type="ECO:0000255" key="3">
    <source>
        <dbReference type="PROSITE-ProRule" id="PRU00530"/>
    </source>
</evidence>
<evidence type="ECO:0000256" key="4">
    <source>
        <dbReference type="SAM" id="MobiDB-lite"/>
    </source>
</evidence>
<evidence type="ECO:0000269" key="5">
    <source>
    </source>
</evidence>
<evidence type="ECO:0000305" key="6"/>
<comment type="function">
    <text evidence="1">Transcription factor that may be implicated in patterning of the central nervous system during early development.</text>
</comment>
<comment type="subcellular location">
    <subcellularLocation>
        <location>Nucleus</location>
    </subcellularLocation>
</comment>
<comment type="tissue specificity">
    <text evidence="5">Expressed in the developing brain and spinal cord. Also found in a restricted region of the auditory vesicle during development. In the adult, expression is restricted to the brain.</text>
</comment>
<comment type="developmental stage">
    <text evidence="5">First expressed at the neurula stage.</text>
</comment>
<comment type="similarity">
    <text evidence="6">Belongs to the POU transcription factor family. Class-3 subfamily.</text>
</comment>
<keyword id="KW-0217">Developmental protein</keyword>
<keyword id="KW-0238">DNA-binding</keyword>
<keyword id="KW-0371">Homeobox</keyword>
<keyword id="KW-0539">Nucleus</keyword>
<keyword id="KW-1185">Reference proteome</keyword>
<keyword id="KW-0804">Transcription</keyword>
<keyword id="KW-0805">Transcription regulation</keyword>
<accession>P70030</accession>
<accession>B1H1P3</accession>
<accession>Q6IP58</accession>
<proteinExistence type="evidence at transcript level"/>
<protein>
    <recommendedName>
        <fullName>POU domain, class 3, transcription factor 2-B</fullName>
    </recommendedName>
    <alternativeName>
        <fullName>Transcription factor POU3-B</fullName>
        <shortName>XlPOU3B</shortName>
    </alternativeName>
</protein>